<organism>
    <name type="scientific">Gallus gallus</name>
    <name type="common">Chicken</name>
    <dbReference type="NCBI Taxonomy" id="9031"/>
    <lineage>
        <taxon>Eukaryota</taxon>
        <taxon>Metazoa</taxon>
        <taxon>Chordata</taxon>
        <taxon>Craniata</taxon>
        <taxon>Vertebrata</taxon>
        <taxon>Euteleostomi</taxon>
        <taxon>Archelosauria</taxon>
        <taxon>Archosauria</taxon>
        <taxon>Dinosauria</taxon>
        <taxon>Saurischia</taxon>
        <taxon>Theropoda</taxon>
        <taxon>Coelurosauria</taxon>
        <taxon>Aves</taxon>
        <taxon>Neognathae</taxon>
        <taxon>Galloanserae</taxon>
        <taxon>Galliformes</taxon>
        <taxon>Phasianidae</taxon>
        <taxon>Phasianinae</taxon>
        <taxon>Gallus</taxon>
    </lineage>
</organism>
<keyword id="KW-0217">Developmental protein</keyword>
<keyword id="KW-0238">DNA-binding</keyword>
<keyword id="KW-0371">Homeobox</keyword>
<keyword id="KW-0539">Nucleus</keyword>
<keyword id="KW-1185">Reference proteome</keyword>
<keyword id="KW-0804">Transcription</keyword>
<keyword id="KW-0805">Transcription regulation</keyword>
<feature type="chain" id="PRO_0000200103" description="Homeobox protein Hox-A13">
    <location>
        <begin position="1"/>
        <end position="290"/>
    </location>
</feature>
<feature type="DNA-binding region" description="Homeobox" evidence="2">
    <location>
        <begin position="224"/>
        <end position="283"/>
    </location>
</feature>
<evidence type="ECO:0000250" key="1"/>
<evidence type="ECO:0000255" key="2">
    <source>
        <dbReference type="PROSITE-ProRule" id="PRU00108"/>
    </source>
</evidence>
<evidence type="ECO:0000305" key="3"/>
<dbReference type="EMBL" id="AY030050">
    <property type="protein sequence ID" value="AAK38163.1"/>
    <property type="molecule type" value="mRNA"/>
</dbReference>
<dbReference type="RefSeq" id="NP_989470.1">
    <property type="nucleotide sequence ID" value="NM_204139.1"/>
</dbReference>
<dbReference type="BMRB" id="Q90X25"/>
<dbReference type="SMR" id="Q90X25"/>
<dbReference type="FunCoup" id="Q90X25">
    <property type="interactions" value="56"/>
</dbReference>
<dbReference type="STRING" id="9031.ENSGALP00000043198"/>
<dbReference type="PaxDb" id="9031-ENSGALP00000037022"/>
<dbReference type="GeneID" id="373934"/>
<dbReference type="KEGG" id="gga:373934"/>
<dbReference type="CTD" id="3209"/>
<dbReference type="VEuPathDB" id="HostDB:geneid_373934"/>
<dbReference type="eggNOG" id="KOG0487">
    <property type="taxonomic scope" value="Eukaryota"/>
</dbReference>
<dbReference type="HOGENOM" id="CLU_059940_1_0_1"/>
<dbReference type="InParanoid" id="Q90X25"/>
<dbReference type="OrthoDB" id="6159439at2759"/>
<dbReference type="PhylomeDB" id="Q90X25"/>
<dbReference type="PRO" id="PR:Q90X25"/>
<dbReference type="Proteomes" id="UP000000539">
    <property type="component" value="Unassembled WGS sequence"/>
</dbReference>
<dbReference type="GO" id="GO:0005634">
    <property type="term" value="C:nucleus"/>
    <property type="evidence" value="ECO:0007669"/>
    <property type="project" value="UniProtKB-SubCell"/>
</dbReference>
<dbReference type="GO" id="GO:0000981">
    <property type="term" value="F:DNA-binding transcription factor activity, RNA polymerase II-specific"/>
    <property type="evidence" value="ECO:0000318"/>
    <property type="project" value="GO_Central"/>
</dbReference>
<dbReference type="GO" id="GO:0000978">
    <property type="term" value="F:RNA polymerase II cis-regulatory region sequence-specific DNA binding"/>
    <property type="evidence" value="ECO:0000318"/>
    <property type="project" value="GO_Central"/>
</dbReference>
<dbReference type="GO" id="GO:0006357">
    <property type="term" value="P:regulation of transcription by RNA polymerase II"/>
    <property type="evidence" value="ECO:0000318"/>
    <property type="project" value="GO_Central"/>
</dbReference>
<dbReference type="CDD" id="cd00086">
    <property type="entry name" value="homeodomain"/>
    <property type="match status" value="1"/>
</dbReference>
<dbReference type="FunFam" id="1.10.10.60:FF:000130">
    <property type="entry name" value="Homeobox protein Hox-D12"/>
    <property type="match status" value="1"/>
</dbReference>
<dbReference type="Gene3D" id="1.10.10.60">
    <property type="entry name" value="Homeodomain-like"/>
    <property type="match status" value="1"/>
</dbReference>
<dbReference type="InterPro" id="IPR051003">
    <property type="entry name" value="AP_axis_regulatory_Homeobox"/>
</dbReference>
<dbReference type="InterPro" id="IPR001356">
    <property type="entry name" value="HD"/>
</dbReference>
<dbReference type="InterPro" id="IPR017970">
    <property type="entry name" value="Homeobox_CS"/>
</dbReference>
<dbReference type="InterPro" id="IPR009057">
    <property type="entry name" value="Homeodomain-like_sf"/>
</dbReference>
<dbReference type="InterPro" id="IPR022067">
    <property type="entry name" value="HoxA13_N"/>
</dbReference>
<dbReference type="PANTHER" id="PTHR45804:SF3">
    <property type="entry name" value="HOMEOBOX PROTEIN HOX-A13"/>
    <property type="match status" value="1"/>
</dbReference>
<dbReference type="PANTHER" id="PTHR45804">
    <property type="entry name" value="SEGMENTATION PROTEIN FUSHI TARAZU-LIKE PROTEIN"/>
    <property type="match status" value="1"/>
</dbReference>
<dbReference type="Pfam" id="PF00046">
    <property type="entry name" value="Homeodomain"/>
    <property type="match status" value="1"/>
</dbReference>
<dbReference type="Pfam" id="PF12284">
    <property type="entry name" value="HoxA13_N"/>
    <property type="match status" value="1"/>
</dbReference>
<dbReference type="SMART" id="SM00389">
    <property type="entry name" value="HOX"/>
    <property type="match status" value="1"/>
</dbReference>
<dbReference type="SUPFAM" id="SSF46689">
    <property type="entry name" value="Homeodomain-like"/>
    <property type="match status" value="1"/>
</dbReference>
<dbReference type="PROSITE" id="PS00027">
    <property type="entry name" value="HOMEOBOX_1"/>
    <property type="match status" value="1"/>
</dbReference>
<dbReference type="PROSITE" id="PS50071">
    <property type="entry name" value="HOMEOBOX_2"/>
    <property type="match status" value="1"/>
</dbReference>
<accession>Q90X25</accession>
<reference key="1">
    <citation type="submission" date="2001-04" db="EMBL/GenBank/DDBJ databases">
        <title>Hoxa-13 function in the posterior gut endoderm.</title>
        <authorList>
            <person name="de Santa Barbara P."/>
            <person name="Roberts D.J."/>
        </authorList>
    </citation>
    <scope>NUCLEOTIDE SEQUENCE [MRNA]</scope>
</reference>
<gene>
    <name type="primary">HOXA13</name>
</gene>
<proteinExistence type="evidence at transcript level"/>
<comment type="function">
    <text evidence="1">Sequence-specific, AT-rich binding transcription factor which is part of a developmental regulatory system that provides cells with specific positional identities on the anterior-posterior axis.</text>
</comment>
<comment type="subunit">
    <text evidence="1">Binds DNA as a homodimer.</text>
</comment>
<comment type="subcellular location">
    <subcellularLocation>
        <location>Nucleus</location>
    </subcellularLocation>
</comment>
<comment type="similarity">
    <text evidence="3">Belongs to the Abd-B homeobox family.</text>
</comment>
<protein>
    <recommendedName>
        <fullName>Homeobox protein Hox-A13</fullName>
    </recommendedName>
</protein>
<sequence>MFLYDNSLDEINKNMDGFHAGSNFAAAAAANPCRNLMAHPAPLAAPSAAAYTSSEAPAAGMAEPAVKQCSPCSAAVQSSSGAALPYGYFGSGYYPCRMTHHNAIKSCAQPASTFADKYMDTSVSGEEFTSRAKEFAFYQGYAAGPYQPVPGYLDVPVVPTIGGPGEPRHDSLLPMDSYQPWAITNGWNGQVYCPKEQSQPPHLWKSTLPDVVSHPSDANSYRRGRKKRVPYTKVQLKELEREYATNKFITKDKRRRISATTNLSERQVTIWFQNRRVKEKKVINKLKTTS</sequence>
<name>HXA13_CHICK</name>